<gene>
    <name evidence="1" type="primary">ispF</name>
    <name type="ordered locus">NT01CX_0736</name>
</gene>
<dbReference type="EC" id="4.6.1.12" evidence="1"/>
<dbReference type="EMBL" id="CP000382">
    <property type="protein sequence ID" value="ABK62622.1"/>
    <property type="molecule type" value="Genomic_DNA"/>
</dbReference>
<dbReference type="RefSeq" id="WP_011723180.1">
    <property type="nucleotide sequence ID" value="NC_008593.1"/>
</dbReference>
<dbReference type="SMR" id="A0Q3K0"/>
<dbReference type="STRING" id="386415.NT01CX_0736"/>
<dbReference type="KEGG" id="cno:NT01CX_0736"/>
<dbReference type="PATRIC" id="fig|386415.7.peg.2241"/>
<dbReference type="eggNOG" id="COG0245">
    <property type="taxonomic scope" value="Bacteria"/>
</dbReference>
<dbReference type="HOGENOM" id="CLU_084630_2_0_9"/>
<dbReference type="UniPathway" id="UPA00056">
    <property type="reaction ID" value="UER00095"/>
</dbReference>
<dbReference type="Proteomes" id="UP000008220">
    <property type="component" value="Chromosome"/>
</dbReference>
<dbReference type="GO" id="GO:0008685">
    <property type="term" value="F:2-C-methyl-D-erythritol 2,4-cyclodiphosphate synthase activity"/>
    <property type="evidence" value="ECO:0007669"/>
    <property type="project" value="UniProtKB-UniRule"/>
</dbReference>
<dbReference type="GO" id="GO:0046872">
    <property type="term" value="F:metal ion binding"/>
    <property type="evidence" value="ECO:0007669"/>
    <property type="project" value="UniProtKB-KW"/>
</dbReference>
<dbReference type="GO" id="GO:0019288">
    <property type="term" value="P:isopentenyl diphosphate biosynthetic process, methylerythritol 4-phosphate pathway"/>
    <property type="evidence" value="ECO:0007669"/>
    <property type="project" value="UniProtKB-UniRule"/>
</dbReference>
<dbReference type="GO" id="GO:0016114">
    <property type="term" value="P:terpenoid biosynthetic process"/>
    <property type="evidence" value="ECO:0007669"/>
    <property type="project" value="InterPro"/>
</dbReference>
<dbReference type="CDD" id="cd00554">
    <property type="entry name" value="MECDP_synthase"/>
    <property type="match status" value="1"/>
</dbReference>
<dbReference type="FunFam" id="3.30.1330.50:FF:000001">
    <property type="entry name" value="2-C-methyl-D-erythritol 2,4-cyclodiphosphate synthase"/>
    <property type="match status" value="1"/>
</dbReference>
<dbReference type="Gene3D" id="3.30.1330.50">
    <property type="entry name" value="2-C-methyl-D-erythritol 2,4-cyclodiphosphate synthase"/>
    <property type="match status" value="1"/>
</dbReference>
<dbReference type="HAMAP" id="MF_00107">
    <property type="entry name" value="IspF"/>
    <property type="match status" value="1"/>
</dbReference>
<dbReference type="InterPro" id="IPR003526">
    <property type="entry name" value="MECDP_synthase"/>
</dbReference>
<dbReference type="InterPro" id="IPR020555">
    <property type="entry name" value="MECDP_synthase_CS"/>
</dbReference>
<dbReference type="InterPro" id="IPR036571">
    <property type="entry name" value="MECDP_synthase_sf"/>
</dbReference>
<dbReference type="NCBIfam" id="TIGR00151">
    <property type="entry name" value="ispF"/>
    <property type="match status" value="1"/>
</dbReference>
<dbReference type="PANTHER" id="PTHR43181">
    <property type="entry name" value="2-C-METHYL-D-ERYTHRITOL 2,4-CYCLODIPHOSPHATE SYNTHASE, CHLOROPLASTIC"/>
    <property type="match status" value="1"/>
</dbReference>
<dbReference type="PANTHER" id="PTHR43181:SF1">
    <property type="entry name" value="2-C-METHYL-D-ERYTHRITOL 2,4-CYCLODIPHOSPHATE SYNTHASE, CHLOROPLASTIC"/>
    <property type="match status" value="1"/>
</dbReference>
<dbReference type="Pfam" id="PF02542">
    <property type="entry name" value="YgbB"/>
    <property type="match status" value="1"/>
</dbReference>
<dbReference type="SUPFAM" id="SSF69765">
    <property type="entry name" value="IpsF-like"/>
    <property type="match status" value="1"/>
</dbReference>
<dbReference type="PROSITE" id="PS01350">
    <property type="entry name" value="ISPF"/>
    <property type="match status" value="1"/>
</dbReference>
<comment type="function">
    <text evidence="1">Involved in the biosynthesis of isopentenyl diphosphate (IPP) and dimethylallyl diphosphate (DMAPP), two major building blocks of isoprenoid compounds. Catalyzes the conversion of 4-diphosphocytidyl-2-C-methyl-D-erythritol 2-phosphate (CDP-ME2P) to 2-C-methyl-D-erythritol 2,4-cyclodiphosphate (ME-CPP) with a corresponding release of cytidine 5-monophosphate (CMP).</text>
</comment>
<comment type="catalytic activity">
    <reaction evidence="1">
        <text>4-CDP-2-C-methyl-D-erythritol 2-phosphate = 2-C-methyl-D-erythritol 2,4-cyclic diphosphate + CMP</text>
        <dbReference type="Rhea" id="RHEA:23864"/>
        <dbReference type="ChEBI" id="CHEBI:57919"/>
        <dbReference type="ChEBI" id="CHEBI:58483"/>
        <dbReference type="ChEBI" id="CHEBI:60377"/>
        <dbReference type="EC" id="4.6.1.12"/>
    </reaction>
</comment>
<comment type="cofactor">
    <cofactor evidence="1">
        <name>a divalent metal cation</name>
        <dbReference type="ChEBI" id="CHEBI:60240"/>
    </cofactor>
    <text evidence="1">Binds 1 divalent metal cation per subunit.</text>
</comment>
<comment type="pathway">
    <text evidence="1">Isoprenoid biosynthesis; isopentenyl diphosphate biosynthesis via DXP pathway; isopentenyl diphosphate from 1-deoxy-D-xylulose 5-phosphate: step 4/6.</text>
</comment>
<comment type="subunit">
    <text evidence="1">Homotrimer.</text>
</comment>
<comment type="similarity">
    <text evidence="1">Belongs to the IspF family.</text>
</comment>
<accession>A0Q3K0</accession>
<evidence type="ECO:0000255" key="1">
    <source>
        <dbReference type="HAMAP-Rule" id="MF_00107"/>
    </source>
</evidence>
<proteinExistence type="inferred from homology"/>
<feature type="chain" id="PRO_1000022827" description="2-C-methyl-D-erythritol 2,4-cyclodiphosphate synthase">
    <location>
        <begin position="1"/>
        <end position="157"/>
    </location>
</feature>
<feature type="binding site" evidence="1">
    <location>
        <begin position="8"/>
        <end position="10"/>
    </location>
    <ligand>
        <name>4-CDP-2-C-methyl-D-erythritol 2-phosphate</name>
        <dbReference type="ChEBI" id="CHEBI:57919"/>
    </ligand>
</feature>
<feature type="binding site" evidence="1">
    <location>
        <position position="8"/>
    </location>
    <ligand>
        <name>a divalent metal cation</name>
        <dbReference type="ChEBI" id="CHEBI:60240"/>
    </ligand>
</feature>
<feature type="binding site" evidence="1">
    <location>
        <position position="10"/>
    </location>
    <ligand>
        <name>a divalent metal cation</name>
        <dbReference type="ChEBI" id="CHEBI:60240"/>
    </ligand>
</feature>
<feature type="binding site" evidence="1">
    <location>
        <begin position="34"/>
        <end position="35"/>
    </location>
    <ligand>
        <name>4-CDP-2-C-methyl-D-erythritol 2-phosphate</name>
        <dbReference type="ChEBI" id="CHEBI:57919"/>
    </ligand>
</feature>
<feature type="binding site" evidence="1">
    <location>
        <position position="42"/>
    </location>
    <ligand>
        <name>a divalent metal cation</name>
        <dbReference type="ChEBI" id="CHEBI:60240"/>
    </ligand>
</feature>
<feature type="binding site" evidence="1">
    <location>
        <begin position="56"/>
        <end position="58"/>
    </location>
    <ligand>
        <name>4-CDP-2-C-methyl-D-erythritol 2-phosphate</name>
        <dbReference type="ChEBI" id="CHEBI:57919"/>
    </ligand>
</feature>
<feature type="binding site" evidence="1">
    <location>
        <begin position="61"/>
        <end position="65"/>
    </location>
    <ligand>
        <name>4-CDP-2-C-methyl-D-erythritol 2-phosphate</name>
        <dbReference type="ChEBI" id="CHEBI:57919"/>
    </ligand>
</feature>
<feature type="binding site" evidence="1">
    <location>
        <begin position="100"/>
        <end position="106"/>
    </location>
    <ligand>
        <name>4-CDP-2-C-methyl-D-erythritol 2-phosphate</name>
        <dbReference type="ChEBI" id="CHEBI:57919"/>
    </ligand>
</feature>
<feature type="binding site" evidence="1">
    <location>
        <begin position="132"/>
        <end position="135"/>
    </location>
    <ligand>
        <name>4-CDP-2-C-methyl-D-erythritol 2-phosphate</name>
        <dbReference type="ChEBI" id="CHEBI:57919"/>
    </ligand>
</feature>
<feature type="binding site" evidence="1">
    <location>
        <position position="139"/>
    </location>
    <ligand>
        <name>4-CDP-2-C-methyl-D-erythritol 2-phosphate</name>
        <dbReference type="ChEBI" id="CHEBI:57919"/>
    </ligand>
</feature>
<feature type="site" description="Transition state stabilizer" evidence="1">
    <location>
        <position position="34"/>
    </location>
</feature>
<feature type="site" description="Transition state stabilizer" evidence="1">
    <location>
        <position position="133"/>
    </location>
</feature>
<reference key="1">
    <citation type="journal article" date="2006" name="Nat. Biotechnol.">
        <title>The genome and transcriptomes of the anti-tumor agent Clostridium novyi-NT.</title>
        <authorList>
            <person name="Bettegowda C."/>
            <person name="Huang X."/>
            <person name="Lin J."/>
            <person name="Cheong I."/>
            <person name="Kohli M."/>
            <person name="Szabo S.A."/>
            <person name="Zhang X."/>
            <person name="Diaz L.A. Jr."/>
            <person name="Velculescu V.E."/>
            <person name="Parmigiani G."/>
            <person name="Kinzler K.W."/>
            <person name="Vogelstein B."/>
            <person name="Zhou S."/>
        </authorList>
    </citation>
    <scope>NUCLEOTIDE SEQUENCE [LARGE SCALE GENOMIC DNA]</scope>
    <source>
        <strain>NT</strain>
    </source>
</reference>
<name>ISPF_CLONN</name>
<protein>
    <recommendedName>
        <fullName evidence="1">2-C-methyl-D-erythritol 2,4-cyclodiphosphate synthase</fullName>
        <shortName evidence="1">MECDP-synthase</shortName>
        <shortName evidence="1">MECPP-synthase</shortName>
        <shortName evidence="1">MECPS</shortName>
        <ecNumber evidence="1">4.6.1.12</ecNumber>
    </recommendedName>
</protein>
<organism>
    <name type="scientific">Clostridium novyi (strain NT)</name>
    <dbReference type="NCBI Taxonomy" id="386415"/>
    <lineage>
        <taxon>Bacteria</taxon>
        <taxon>Bacillati</taxon>
        <taxon>Bacillota</taxon>
        <taxon>Clostridia</taxon>
        <taxon>Eubacteriales</taxon>
        <taxon>Clostridiaceae</taxon>
        <taxon>Clostridium</taxon>
    </lineage>
</organism>
<sequence>MRIGMGYDVHKLCENRKLILGGIEIPYELGLLGHSDADVLIHAIMDSLLGAAALGDIGKHFPDTDNKYKGISSMLLLKEVGKLLNENSYEIINIDATIIAQKPKMAPYIKDMIKNIASALCINENQVNIKATTEEGLGFTGEGLGISSQSICLINEK</sequence>
<keyword id="KW-0414">Isoprene biosynthesis</keyword>
<keyword id="KW-0456">Lyase</keyword>
<keyword id="KW-0479">Metal-binding</keyword>
<keyword id="KW-1185">Reference proteome</keyword>